<feature type="chain" id="PRO_0000245779" description="Large ribosomal subunit protein P3z">
    <location>
        <begin position="1"/>
        <end position="119"/>
    </location>
</feature>
<feature type="region of interest" description="Disordered" evidence="2">
    <location>
        <begin position="79"/>
        <end position="119"/>
    </location>
</feature>
<feature type="compositionally biased region" description="Gly residues" evidence="2">
    <location>
        <begin position="79"/>
        <end position="90"/>
    </location>
</feature>
<feature type="compositionally biased region" description="Basic and acidic residues" evidence="2">
    <location>
        <begin position="96"/>
        <end position="105"/>
    </location>
</feature>
<name>RLA31_ARATH</name>
<evidence type="ECO:0000250" key="1"/>
<evidence type="ECO:0000256" key="2">
    <source>
        <dbReference type="SAM" id="MobiDB-lite"/>
    </source>
</evidence>
<evidence type="ECO:0000303" key="3">
    <source>
    </source>
</evidence>
<evidence type="ECO:0000305" key="4"/>
<accession>Q9SVZ6</accession>
<organism>
    <name type="scientific">Arabidopsis thaliana</name>
    <name type="common">Mouse-ear cress</name>
    <dbReference type="NCBI Taxonomy" id="3702"/>
    <lineage>
        <taxon>Eukaryota</taxon>
        <taxon>Viridiplantae</taxon>
        <taxon>Streptophyta</taxon>
        <taxon>Embryophyta</taxon>
        <taxon>Tracheophyta</taxon>
        <taxon>Spermatophyta</taxon>
        <taxon>Magnoliopsida</taxon>
        <taxon>eudicotyledons</taxon>
        <taxon>Gunneridae</taxon>
        <taxon>Pentapetalae</taxon>
        <taxon>rosids</taxon>
        <taxon>malvids</taxon>
        <taxon>Brassicales</taxon>
        <taxon>Brassicaceae</taxon>
        <taxon>Camelineae</taxon>
        <taxon>Arabidopsis</taxon>
    </lineage>
</organism>
<reference key="1">
    <citation type="journal article" date="1999" name="Nature">
        <title>Sequence and analysis of chromosome 4 of the plant Arabidopsis thaliana.</title>
        <authorList>
            <person name="Mayer K.F.X."/>
            <person name="Schueller C."/>
            <person name="Wambutt R."/>
            <person name="Murphy G."/>
            <person name="Volckaert G."/>
            <person name="Pohl T."/>
            <person name="Duesterhoeft A."/>
            <person name="Stiekema W."/>
            <person name="Entian K.-D."/>
            <person name="Terryn N."/>
            <person name="Harris B."/>
            <person name="Ansorge W."/>
            <person name="Brandt P."/>
            <person name="Grivell L.A."/>
            <person name="Rieger M."/>
            <person name="Weichselgartner M."/>
            <person name="de Simone V."/>
            <person name="Obermaier B."/>
            <person name="Mache R."/>
            <person name="Mueller M."/>
            <person name="Kreis M."/>
            <person name="Delseny M."/>
            <person name="Puigdomenech P."/>
            <person name="Watson M."/>
            <person name="Schmidtheini T."/>
            <person name="Reichert B."/>
            <person name="Portetelle D."/>
            <person name="Perez-Alonso M."/>
            <person name="Boutry M."/>
            <person name="Bancroft I."/>
            <person name="Vos P."/>
            <person name="Hoheisel J."/>
            <person name="Zimmermann W."/>
            <person name="Wedler H."/>
            <person name="Ridley P."/>
            <person name="Langham S.-A."/>
            <person name="McCullagh B."/>
            <person name="Bilham L."/>
            <person name="Robben J."/>
            <person name="van der Schueren J."/>
            <person name="Grymonprez B."/>
            <person name="Chuang Y.-J."/>
            <person name="Vandenbussche F."/>
            <person name="Braeken M."/>
            <person name="Weltjens I."/>
            <person name="Voet M."/>
            <person name="Bastiaens I."/>
            <person name="Aert R."/>
            <person name="Defoor E."/>
            <person name="Weitzenegger T."/>
            <person name="Bothe G."/>
            <person name="Ramsperger U."/>
            <person name="Hilbert H."/>
            <person name="Braun M."/>
            <person name="Holzer E."/>
            <person name="Brandt A."/>
            <person name="Peters S."/>
            <person name="van Staveren M."/>
            <person name="Dirkse W."/>
            <person name="Mooijman P."/>
            <person name="Klein Lankhorst R."/>
            <person name="Rose M."/>
            <person name="Hauf J."/>
            <person name="Koetter P."/>
            <person name="Berneiser S."/>
            <person name="Hempel S."/>
            <person name="Feldpausch M."/>
            <person name="Lamberth S."/>
            <person name="Van den Daele H."/>
            <person name="De Keyser A."/>
            <person name="Buysshaert C."/>
            <person name="Gielen J."/>
            <person name="Villarroel R."/>
            <person name="De Clercq R."/>
            <person name="van Montagu M."/>
            <person name="Rogers J."/>
            <person name="Cronin A."/>
            <person name="Quail M.A."/>
            <person name="Bray-Allen S."/>
            <person name="Clark L."/>
            <person name="Doggett J."/>
            <person name="Hall S."/>
            <person name="Kay M."/>
            <person name="Lennard N."/>
            <person name="McLay K."/>
            <person name="Mayes R."/>
            <person name="Pettett A."/>
            <person name="Rajandream M.A."/>
            <person name="Lyne M."/>
            <person name="Benes V."/>
            <person name="Rechmann S."/>
            <person name="Borkova D."/>
            <person name="Bloecker H."/>
            <person name="Scharfe M."/>
            <person name="Grimm M."/>
            <person name="Loehnert T.-H."/>
            <person name="Dose S."/>
            <person name="de Haan M."/>
            <person name="Maarse A.C."/>
            <person name="Schaefer M."/>
            <person name="Mueller-Auer S."/>
            <person name="Gabel C."/>
            <person name="Fuchs M."/>
            <person name="Fartmann B."/>
            <person name="Granderath K."/>
            <person name="Dauner D."/>
            <person name="Herzl A."/>
            <person name="Neumann S."/>
            <person name="Argiriou A."/>
            <person name="Vitale D."/>
            <person name="Liguori R."/>
            <person name="Piravandi E."/>
            <person name="Massenet O."/>
            <person name="Quigley F."/>
            <person name="Clabauld G."/>
            <person name="Muendlein A."/>
            <person name="Felber R."/>
            <person name="Schnabl S."/>
            <person name="Hiller R."/>
            <person name="Schmidt W."/>
            <person name="Lecharny A."/>
            <person name="Aubourg S."/>
            <person name="Chefdor F."/>
            <person name="Cooke R."/>
            <person name="Berger C."/>
            <person name="Monfort A."/>
            <person name="Casacuberta E."/>
            <person name="Gibbons T."/>
            <person name="Weber N."/>
            <person name="Vandenbol M."/>
            <person name="Bargues M."/>
            <person name="Terol J."/>
            <person name="Torres A."/>
            <person name="Perez-Perez A."/>
            <person name="Purnelle B."/>
            <person name="Bent E."/>
            <person name="Johnson S."/>
            <person name="Tacon D."/>
            <person name="Jesse T."/>
            <person name="Heijnen L."/>
            <person name="Schwarz S."/>
            <person name="Scholler P."/>
            <person name="Heber S."/>
            <person name="Francs P."/>
            <person name="Bielke C."/>
            <person name="Frishman D."/>
            <person name="Haase D."/>
            <person name="Lemcke K."/>
            <person name="Mewes H.-W."/>
            <person name="Stocker S."/>
            <person name="Zaccaria P."/>
            <person name="Bevan M."/>
            <person name="Wilson R.K."/>
            <person name="de la Bastide M."/>
            <person name="Habermann K."/>
            <person name="Parnell L."/>
            <person name="Dedhia N."/>
            <person name="Gnoj L."/>
            <person name="Schutz K."/>
            <person name="Huang E."/>
            <person name="Spiegel L."/>
            <person name="Sekhon M."/>
            <person name="Murray J."/>
            <person name="Sheet P."/>
            <person name="Cordes M."/>
            <person name="Abu-Threideh J."/>
            <person name="Stoneking T."/>
            <person name="Kalicki J."/>
            <person name="Graves T."/>
            <person name="Harmon G."/>
            <person name="Edwards J."/>
            <person name="Latreille P."/>
            <person name="Courtney L."/>
            <person name="Cloud J."/>
            <person name="Abbott A."/>
            <person name="Scott K."/>
            <person name="Johnson D."/>
            <person name="Minx P."/>
            <person name="Bentley D."/>
            <person name="Fulton B."/>
            <person name="Miller N."/>
            <person name="Greco T."/>
            <person name="Kemp K."/>
            <person name="Kramer J."/>
            <person name="Fulton L."/>
            <person name="Mardis E."/>
            <person name="Dante M."/>
            <person name="Pepin K."/>
            <person name="Hillier L.W."/>
            <person name="Nelson J."/>
            <person name="Spieth J."/>
            <person name="Ryan E."/>
            <person name="Andrews S."/>
            <person name="Geisel C."/>
            <person name="Layman D."/>
            <person name="Du H."/>
            <person name="Ali J."/>
            <person name="Berghoff A."/>
            <person name="Jones K."/>
            <person name="Drone K."/>
            <person name="Cotton M."/>
            <person name="Joshu C."/>
            <person name="Antonoiu B."/>
            <person name="Zidanic M."/>
            <person name="Strong C."/>
            <person name="Sun H."/>
            <person name="Lamar B."/>
            <person name="Yordan C."/>
            <person name="Ma P."/>
            <person name="Zhong J."/>
            <person name="Preston R."/>
            <person name="Vil D."/>
            <person name="Shekher M."/>
            <person name="Matero A."/>
            <person name="Shah R."/>
            <person name="Swaby I.K."/>
            <person name="O'Shaughnessy A."/>
            <person name="Rodriguez M."/>
            <person name="Hoffman J."/>
            <person name="Till S."/>
            <person name="Granat S."/>
            <person name="Shohdy N."/>
            <person name="Hasegawa A."/>
            <person name="Hameed A."/>
            <person name="Lodhi M."/>
            <person name="Johnson A."/>
            <person name="Chen E."/>
            <person name="Marra M.A."/>
            <person name="Martienssen R."/>
            <person name="McCombie W.R."/>
        </authorList>
    </citation>
    <scope>NUCLEOTIDE SEQUENCE [LARGE SCALE GENOMIC DNA]</scope>
    <source>
        <strain>cv. Columbia</strain>
    </source>
</reference>
<reference key="2">
    <citation type="journal article" date="2017" name="Plant J.">
        <title>Araport11: a complete reannotation of the Arabidopsis thaliana reference genome.</title>
        <authorList>
            <person name="Cheng C.Y."/>
            <person name="Krishnakumar V."/>
            <person name="Chan A.P."/>
            <person name="Thibaud-Nissen F."/>
            <person name="Schobel S."/>
            <person name="Town C.D."/>
        </authorList>
    </citation>
    <scope>GENOME REANNOTATION</scope>
    <source>
        <strain>cv. Columbia</strain>
    </source>
</reference>
<reference key="3">
    <citation type="journal article" date="2003" name="Science">
        <title>Empirical analysis of transcriptional activity in the Arabidopsis genome.</title>
        <authorList>
            <person name="Yamada K."/>
            <person name="Lim J."/>
            <person name="Dale J.M."/>
            <person name="Chen H."/>
            <person name="Shinn P."/>
            <person name="Palm C.J."/>
            <person name="Southwick A.M."/>
            <person name="Wu H.C."/>
            <person name="Kim C.J."/>
            <person name="Nguyen M."/>
            <person name="Pham P.K."/>
            <person name="Cheuk R.F."/>
            <person name="Karlin-Newmann G."/>
            <person name="Liu S.X."/>
            <person name="Lam B."/>
            <person name="Sakano H."/>
            <person name="Wu T."/>
            <person name="Yu G."/>
            <person name="Miranda M."/>
            <person name="Quach H.L."/>
            <person name="Tripp M."/>
            <person name="Chang C.H."/>
            <person name="Lee J.M."/>
            <person name="Toriumi M.J."/>
            <person name="Chan M.M."/>
            <person name="Tang C.C."/>
            <person name="Onodera C.S."/>
            <person name="Deng J.M."/>
            <person name="Akiyama K."/>
            <person name="Ansari Y."/>
            <person name="Arakawa T."/>
            <person name="Banh J."/>
            <person name="Banno F."/>
            <person name="Bowser L."/>
            <person name="Brooks S.Y."/>
            <person name="Carninci P."/>
            <person name="Chao Q."/>
            <person name="Choy N."/>
            <person name="Enju A."/>
            <person name="Goldsmith A.D."/>
            <person name="Gurjal M."/>
            <person name="Hansen N.F."/>
            <person name="Hayashizaki Y."/>
            <person name="Johnson-Hopson C."/>
            <person name="Hsuan V.W."/>
            <person name="Iida K."/>
            <person name="Karnes M."/>
            <person name="Khan S."/>
            <person name="Koesema E."/>
            <person name="Ishida J."/>
            <person name="Jiang P.X."/>
            <person name="Jones T."/>
            <person name="Kawai J."/>
            <person name="Kamiya A."/>
            <person name="Meyers C."/>
            <person name="Nakajima M."/>
            <person name="Narusaka M."/>
            <person name="Seki M."/>
            <person name="Sakurai T."/>
            <person name="Satou M."/>
            <person name="Tamse R."/>
            <person name="Vaysberg M."/>
            <person name="Wallender E.K."/>
            <person name="Wong C."/>
            <person name="Yamamura Y."/>
            <person name="Yuan S."/>
            <person name="Shinozaki K."/>
            <person name="Davis R.W."/>
            <person name="Theologis A."/>
            <person name="Ecker J.R."/>
        </authorList>
    </citation>
    <scope>NUCLEOTIDE SEQUENCE [LARGE SCALE MRNA]</scope>
    <source>
        <strain>cv. Columbia</strain>
    </source>
</reference>
<reference key="4">
    <citation type="journal article" date="2001" name="Plant Physiol.">
        <title>The organization of cytoplasmic ribosomal protein genes in the Arabidopsis genome.</title>
        <authorList>
            <person name="Barakat A."/>
            <person name="Szick-Miranda K."/>
            <person name="Chang I.-F."/>
            <person name="Guyot R."/>
            <person name="Blanc G."/>
            <person name="Cooke R."/>
            <person name="Delseny M."/>
            <person name="Bailey-Serres J."/>
        </authorList>
    </citation>
    <scope>GENE FAMILY ORGANIZATION</scope>
    <scope>NOMENCLATURE</scope>
</reference>
<reference key="5">
    <citation type="journal article" date="2023" name="Plant Cell">
        <title>An updated nomenclature for plant ribosomal protein genes.</title>
        <authorList>
            <person name="Scarpin M.R."/>
            <person name="Busche M."/>
            <person name="Martinez R.E."/>
            <person name="Harper L.C."/>
            <person name="Reiser L."/>
            <person name="Szakonyi D."/>
            <person name="Merchante C."/>
            <person name="Lan T."/>
            <person name="Xiong W."/>
            <person name="Mo B."/>
            <person name="Tang G."/>
            <person name="Chen X."/>
            <person name="Bailey-Serres J."/>
            <person name="Browning K.S."/>
            <person name="Brunkard J.O."/>
        </authorList>
    </citation>
    <scope>NOMENCLATURE</scope>
</reference>
<keyword id="KW-0597">Phosphoprotein</keyword>
<keyword id="KW-1185">Reference proteome</keyword>
<keyword id="KW-0687">Ribonucleoprotein</keyword>
<keyword id="KW-0689">Ribosomal protein</keyword>
<gene>
    <name type="primary">RPP3A</name>
    <name type="ordered locus">At4g25890</name>
    <name type="ORF">F14M19.170</name>
</gene>
<sequence>MGVFTFVCKNGGGAWSAKQHEGELESSASSTYELQRKLVQVSLSADSSGGVQSSFSLVSPTSAVFQVIVGGGGGGGFSAGGAASSGGGAGEAAAAPKEDEKKKEESEEEEGDFGFDLFG</sequence>
<proteinExistence type="inferred from homology"/>
<protein>
    <recommendedName>
        <fullName evidence="3">Large ribosomal subunit protein P3z</fullName>
    </recommendedName>
    <alternativeName>
        <fullName>60S acidic ribosomal protein P3-1</fullName>
    </alternativeName>
</protein>
<dbReference type="EMBL" id="AL049480">
    <property type="protein sequence ID" value="CAB39610.1"/>
    <property type="molecule type" value="Genomic_DNA"/>
</dbReference>
<dbReference type="EMBL" id="AL161564">
    <property type="protein sequence ID" value="CAB79444.1"/>
    <property type="molecule type" value="Genomic_DNA"/>
</dbReference>
<dbReference type="EMBL" id="CP002687">
    <property type="protein sequence ID" value="AEE85130.1"/>
    <property type="molecule type" value="Genomic_DNA"/>
</dbReference>
<dbReference type="EMBL" id="AY070030">
    <property type="protein sequence ID" value="AAL49787.1"/>
    <property type="molecule type" value="mRNA"/>
</dbReference>
<dbReference type="EMBL" id="AY091219">
    <property type="protein sequence ID" value="AAM14158.1"/>
    <property type="molecule type" value="mRNA"/>
</dbReference>
<dbReference type="PIR" id="T04243">
    <property type="entry name" value="T04243"/>
</dbReference>
<dbReference type="RefSeq" id="NP_194319.1">
    <property type="nucleotide sequence ID" value="NM_118722.4"/>
</dbReference>
<dbReference type="BioGRID" id="13982">
    <property type="interactions" value="6"/>
</dbReference>
<dbReference type="FunCoup" id="Q9SVZ6">
    <property type="interactions" value="192"/>
</dbReference>
<dbReference type="STRING" id="3702.Q9SVZ6"/>
<dbReference type="GlyGen" id="Q9SVZ6">
    <property type="glycosylation" value="1 site"/>
</dbReference>
<dbReference type="iPTMnet" id="Q9SVZ6"/>
<dbReference type="PaxDb" id="3702-AT4G25890.1"/>
<dbReference type="ProteomicsDB" id="228178"/>
<dbReference type="EnsemblPlants" id="AT4G25890.1">
    <property type="protein sequence ID" value="AT4G25890.1"/>
    <property type="gene ID" value="AT4G25890"/>
</dbReference>
<dbReference type="GeneID" id="828695"/>
<dbReference type="Gramene" id="AT4G25890.1">
    <property type="protein sequence ID" value="AT4G25890.1"/>
    <property type="gene ID" value="AT4G25890"/>
</dbReference>
<dbReference type="KEGG" id="ath:AT4G25890"/>
<dbReference type="Araport" id="AT4G25890"/>
<dbReference type="TAIR" id="AT4G25890"/>
<dbReference type="eggNOG" id="ENOG502S1SG">
    <property type="taxonomic scope" value="Eukaryota"/>
</dbReference>
<dbReference type="HOGENOM" id="CLU_2053070_0_0_1"/>
<dbReference type="InParanoid" id="Q9SVZ6"/>
<dbReference type="OMA" id="AKQHEGE"/>
<dbReference type="OrthoDB" id="2015129at2759"/>
<dbReference type="PhylomeDB" id="Q9SVZ6"/>
<dbReference type="PRO" id="PR:Q9SVZ6"/>
<dbReference type="Proteomes" id="UP000006548">
    <property type="component" value="Chromosome 4"/>
</dbReference>
<dbReference type="ExpressionAtlas" id="Q9SVZ6">
    <property type="expression patterns" value="baseline and differential"/>
</dbReference>
<dbReference type="GO" id="GO:0005829">
    <property type="term" value="C:cytosol"/>
    <property type="evidence" value="ECO:0007005"/>
    <property type="project" value="TAIR"/>
</dbReference>
<dbReference type="GO" id="GO:0022626">
    <property type="term" value="C:cytosolic ribosome"/>
    <property type="evidence" value="ECO:0007005"/>
    <property type="project" value="TAIR"/>
</dbReference>
<dbReference type="GO" id="GO:1990904">
    <property type="term" value="C:ribonucleoprotein complex"/>
    <property type="evidence" value="ECO:0007669"/>
    <property type="project" value="UniProtKB-KW"/>
</dbReference>
<dbReference type="GO" id="GO:0003735">
    <property type="term" value="F:structural constituent of ribosome"/>
    <property type="evidence" value="ECO:0000314"/>
    <property type="project" value="CAFA"/>
</dbReference>
<dbReference type="GO" id="GO:0006414">
    <property type="term" value="P:translational elongation"/>
    <property type="evidence" value="ECO:0007669"/>
    <property type="project" value="InterPro"/>
</dbReference>
<dbReference type="HAMAP" id="MF_01478">
    <property type="entry name" value="Ribosomal_L12_arch"/>
    <property type="match status" value="1"/>
</dbReference>
<dbReference type="InterPro" id="IPR027534">
    <property type="entry name" value="Ribosomal_P1/P2"/>
</dbReference>
<dbReference type="InterPro" id="IPR044252">
    <property type="entry name" value="RPP3"/>
</dbReference>
<dbReference type="PANTHER" id="PTHR47207">
    <property type="entry name" value="60S ACIDIC RIBOSOMAL PROTEIN P3-1-RELATED"/>
    <property type="match status" value="1"/>
</dbReference>
<dbReference type="PANTHER" id="PTHR47207:SF2">
    <property type="entry name" value="LARGE RIBOSOMAL SUBUNIT PROTEIN P3Y-RELATED"/>
    <property type="match status" value="1"/>
</dbReference>
<dbReference type="Pfam" id="PF00428">
    <property type="entry name" value="Ribosomal_60s"/>
    <property type="match status" value="1"/>
</dbReference>
<comment type="function">
    <text evidence="1">Plays an important role in the elongation step of protein synthesis.</text>
</comment>
<comment type="PTM">
    <text evidence="1">Phosphorylated.</text>
</comment>
<comment type="similarity">
    <text evidence="4">Belongs to the eukaryotic ribosomal protein P1/P2 family.</text>
</comment>